<protein>
    <recommendedName>
        <fullName>Glycosyl hydrolase family 109 protein 1</fullName>
        <ecNumber>3.2.1.-</ecNumber>
    </recommendedName>
</protein>
<sequence length="481" mass="53803">MDNSSSRRRFLQTLGLATGALAAGSFANAQEVAPLAPKKITIPDPNNIGPMTTWPPRKPGAIYMGGFRAPKLDKVRVAFVGVGERGSMHVGQMAVIEGAEIVGICDLYEDWAKRSADVVEKKTGKRPPIFTKGPEDYKRMMKEVKPDAVIVCPSWEWHCRVTCDVMKMGAHAFVEVPMAVSIKELWEIVDTSEETRKHCMMMENVNYGREELMYLNMVRQGVIGDLLYGEAAYIHELRGQMKQVERGTGSWRTYHYAKRNGNVYPTHGLGPIAQYMNLARKDDCFGRLVSFSSPALGRAAYAKKNFPADHKWNKLDFACGDMNTSIIKTTMGRTVLVEWDETSPRPYSRLNLIQGTLGTLAGFPTRVAGEKLGNGNYHEWIEGKEKLAPIFEKYDHPLWKRIGPLALKMGGHGGMDFVMLFRIIECLRNGEPMDQNVYEGAFWSSVSELSEYSVAQGGMPQVFPDFTRGDWKTTAPLGIVQ</sequence>
<organism>
    <name type="scientific">Akkermansia muciniphila (strain ATCC BAA-835 / DSM 22959 / JCM 33894 / BCRC 81048 / CCUG 64013 / CIP 107961 / Muc)</name>
    <dbReference type="NCBI Taxonomy" id="349741"/>
    <lineage>
        <taxon>Bacteria</taxon>
        <taxon>Pseudomonadati</taxon>
        <taxon>Verrucomicrobiota</taxon>
        <taxon>Verrucomicrobiia</taxon>
        <taxon>Verrucomicrobiales</taxon>
        <taxon>Akkermansiaceae</taxon>
        <taxon>Akkermansia</taxon>
    </lineage>
</organism>
<gene>
    <name type="ordered locus">Amuc_0017</name>
</gene>
<proteinExistence type="inferred from homology"/>
<reference key="1">
    <citation type="journal article" date="2011" name="PLoS ONE">
        <title>The genome of Akkermansia muciniphila, a dedicated intestinal mucin degrader, and its use in exploring intestinal metagenomes.</title>
        <authorList>
            <person name="van Passel M.W."/>
            <person name="Kant R."/>
            <person name="Zoetendal E.G."/>
            <person name="Plugge C.M."/>
            <person name="Derrien M."/>
            <person name="Malfatti S.A."/>
            <person name="Chain P.S."/>
            <person name="Woyke T."/>
            <person name="Palva A."/>
            <person name="de Vos W.M."/>
            <person name="Smidt H."/>
        </authorList>
    </citation>
    <scope>NUCLEOTIDE SEQUENCE [LARGE SCALE GENOMIC DNA]</scope>
    <source>
        <strain>ATCC BAA-835 / DSM 22959 / JCM 33894 / BCRC 81048 / CCUG 64013 / CIP 107961 / Muc</strain>
    </source>
</reference>
<accession>B2UL75</accession>
<name>G1091_AKKM8</name>
<dbReference type="EC" id="3.2.1.-"/>
<dbReference type="EMBL" id="CP001071">
    <property type="protein sequence ID" value="ACD03864.1"/>
    <property type="molecule type" value="Genomic_DNA"/>
</dbReference>
<dbReference type="RefSeq" id="WP_012419079.1">
    <property type="nucleotide sequence ID" value="NC_010655.1"/>
</dbReference>
<dbReference type="SMR" id="B2UL75"/>
<dbReference type="STRING" id="349741.Amuc_0017"/>
<dbReference type="CAZy" id="GH109">
    <property type="family name" value="Glycoside Hydrolase Family 109"/>
</dbReference>
<dbReference type="PaxDb" id="349741-Amuc_0017"/>
<dbReference type="KEGG" id="amu:Amuc_0017"/>
<dbReference type="eggNOG" id="COG0673">
    <property type="taxonomic scope" value="Bacteria"/>
</dbReference>
<dbReference type="HOGENOM" id="CLU_046965_0_0_0"/>
<dbReference type="OrthoDB" id="9771072at2"/>
<dbReference type="BioCyc" id="AMUC349741:G1GBX-19-MONOMER"/>
<dbReference type="Proteomes" id="UP000001031">
    <property type="component" value="Chromosome"/>
</dbReference>
<dbReference type="GO" id="GO:0016798">
    <property type="term" value="F:hydrolase activity, acting on glycosyl bonds"/>
    <property type="evidence" value="ECO:0007669"/>
    <property type="project" value="UniProtKB-KW"/>
</dbReference>
<dbReference type="GO" id="GO:0000166">
    <property type="term" value="F:nucleotide binding"/>
    <property type="evidence" value="ECO:0007669"/>
    <property type="project" value="InterPro"/>
</dbReference>
<dbReference type="Gene3D" id="3.30.360.10">
    <property type="entry name" value="Dihydrodipicolinate Reductase, domain 2"/>
    <property type="match status" value="1"/>
</dbReference>
<dbReference type="Gene3D" id="3.40.50.720">
    <property type="entry name" value="NAD(P)-binding Rossmann-like Domain"/>
    <property type="match status" value="1"/>
</dbReference>
<dbReference type="InterPro" id="IPR000683">
    <property type="entry name" value="Gfo/Idh/MocA-like_OxRdtase_N"/>
</dbReference>
<dbReference type="InterPro" id="IPR050463">
    <property type="entry name" value="Gfo/Idh/MocA_oxidrdct_glycsds"/>
</dbReference>
<dbReference type="InterPro" id="IPR049303">
    <property type="entry name" value="Glyco_hydro_109_C"/>
</dbReference>
<dbReference type="InterPro" id="IPR036291">
    <property type="entry name" value="NAD(P)-bd_dom_sf"/>
</dbReference>
<dbReference type="InterPro" id="IPR006311">
    <property type="entry name" value="TAT_signal"/>
</dbReference>
<dbReference type="InterPro" id="IPR019546">
    <property type="entry name" value="TAT_signal_bac_arc"/>
</dbReference>
<dbReference type="NCBIfam" id="TIGR01409">
    <property type="entry name" value="TAT_signal_seq"/>
    <property type="match status" value="1"/>
</dbReference>
<dbReference type="PANTHER" id="PTHR43818">
    <property type="entry name" value="BCDNA.GH03377"/>
    <property type="match status" value="1"/>
</dbReference>
<dbReference type="PANTHER" id="PTHR43818:SF1">
    <property type="entry name" value="GLYCOSYL HYDROLASE FAMILY 109 PROTEIN"/>
    <property type="match status" value="1"/>
</dbReference>
<dbReference type="Pfam" id="PF01408">
    <property type="entry name" value="GFO_IDH_MocA"/>
    <property type="match status" value="1"/>
</dbReference>
<dbReference type="Pfam" id="PF21252">
    <property type="entry name" value="Glyco_hydro_109_C"/>
    <property type="match status" value="1"/>
</dbReference>
<dbReference type="SUPFAM" id="SSF51735">
    <property type="entry name" value="NAD(P)-binding Rossmann-fold domains"/>
    <property type="match status" value="1"/>
</dbReference>
<dbReference type="PROSITE" id="PS51318">
    <property type="entry name" value="TAT"/>
    <property type="match status" value="1"/>
</dbReference>
<evidence type="ECO:0000250" key="1"/>
<evidence type="ECO:0000255" key="2">
    <source>
        <dbReference type="PROSITE-ProRule" id="PRU00648"/>
    </source>
</evidence>
<evidence type="ECO:0000305" key="3"/>
<feature type="signal peptide" description="Tat-type signal" evidence="2">
    <location>
        <begin position="1"/>
        <end position="29"/>
    </location>
</feature>
<feature type="chain" id="PRO_5000370243" description="Glycosyl hydrolase family 109 protein 1">
    <location>
        <begin position="30"/>
        <end position="481"/>
    </location>
</feature>
<feature type="binding site" evidence="1">
    <location>
        <begin position="84"/>
        <end position="85"/>
    </location>
    <ligand>
        <name>NAD(+)</name>
        <dbReference type="ChEBI" id="CHEBI:57540"/>
    </ligand>
</feature>
<feature type="binding site" evidence="1">
    <location>
        <position position="106"/>
    </location>
    <ligand>
        <name>NAD(+)</name>
        <dbReference type="ChEBI" id="CHEBI:57540"/>
    </ligand>
</feature>
<feature type="binding site" evidence="1">
    <location>
        <begin position="155"/>
        <end position="158"/>
    </location>
    <ligand>
        <name>NAD(+)</name>
        <dbReference type="ChEBI" id="CHEBI:57540"/>
    </ligand>
</feature>
<feature type="binding site" evidence="1">
    <location>
        <begin position="175"/>
        <end position="176"/>
    </location>
    <ligand>
        <name>NAD(+)</name>
        <dbReference type="ChEBI" id="CHEBI:57540"/>
    </ligand>
</feature>
<feature type="binding site" evidence="1">
    <location>
        <position position="204"/>
    </location>
    <ligand>
        <name>NAD(+)</name>
        <dbReference type="ChEBI" id="CHEBI:57540"/>
    </ligand>
</feature>
<feature type="binding site" evidence="1">
    <location>
        <position position="233"/>
    </location>
    <ligand>
        <name>substrate</name>
    </ligand>
</feature>
<feature type="binding site" evidence="1">
    <location>
        <position position="252"/>
    </location>
    <ligand>
        <name>substrate</name>
    </ligand>
</feature>
<feature type="binding site" evidence="1">
    <location>
        <begin position="264"/>
        <end position="267"/>
    </location>
    <ligand>
        <name>substrate</name>
    </ligand>
</feature>
<feature type="binding site" evidence="1">
    <location>
        <position position="264"/>
    </location>
    <ligand>
        <name>NAD(+)</name>
        <dbReference type="ChEBI" id="CHEBI:57540"/>
    </ligand>
</feature>
<feature type="binding site" evidence="1">
    <location>
        <position position="347"/>
    </location>
    <ligand>
        <name>substrate</name>
    </ligand>
</feature>
<comment type="function">
    <text evidence="1">Glycosidase.</text>
</comment>
<comment type="cofactor">
    <cofactor evidence="1">
        <name>NAD(+)</name>
        <dbReference type="ChEBI" id="CHEBI:57540"/>
    </cofactor>
    <text evidence="1">Binds 1 NAD(+) per subunit. The NAD(+) cannot dissociate.</text>
</comment>
<comment type="PTM">
    <text>Predicted to be exported by the Tat system. The position of the signal peptide cleavage has not been experimentally proven.</text>
</comment>
<comment type="similarity">
    <text evidence="3">Belongs to the Gfo/Idh/MocA family. Glycosyl hydrolase 109 subfamily.</text>
</comment>
<keyword id="KW-0326">Glycosidase</keyword>
<keyword id="KW-0378">Hydrolase</keyword>
<keyword id="KW-0520">NAD</keyword>
<keyword id="KW-1185">Reference proteome</keyword>
<keyword id="KW-0732">Signal</keyword>